<proteinExistence type="inferred from homology"/>
<organism>
    <name type="scientific">Amborella trichopoda</name>
    <dbReference type="NCBI Taxonomy" id="13333"/>
    <lineage>
        <taxon>Eukaryota</taxon>
        <taxon>Viridiplantae</taxon>
        <taxon>Streptophyta</taxon>
        <taxon>Embryophyta</taxon>
        <taxon>Tracheophyta</taxon>
        <taxon>Spermatophyta</taxon>
        <taxon>Magnoliopsida</taxon>
        <taxon>Amborellales</taxon>
        <taxon>Amborellaceae</taxon>
        <taxon>Amborella</taxon>
    </lineage>
</organism>
<comment type="function">
    <text evidence="1">Binds to 23S rRNA.</text>
</comment>
<comment type="subunit">
    <text evidence="1">Part of the 50S ribosomal subunit.</text>
</comment>
<comment type="subcellular location">
    <subcellularLocation>
        <location>Plastid</location>
        <location>Chloroplast</location>
    </subcellularLocation>
</comment>
<comment type="similarity">
    <text evidence="2">Belongs to the universal ribosomal protein uL23 family.</text>
</comment>
<sequence>MDGIKYAVFTEKSIRLLGNNQYTSNVESGSTRAEIKHWIELFFGVKVIAMNSHRLPVPGKGRRMGPLMGHRMHYRRMIITLQPGYSIPPLIEKRT</sequence>
<dbReference type="EMBL" id="AJ506156">
    <property type="protein sequence ID" value="CAD45148.1"/>
    <property type="molecule type" value="Genomic_DNA"/>
</dbReference>
<dbReference type="EMBL" id="AJ506156">
    <property type="protein sequence ID" value="CAD45169.1"/>
    <property type="molecule type" value="Genomic_DNA"/>
</dbReference>
<dbReference type="SMR" id="Q70XV3"/>
<dbReference type="STRING" id="13333.Q70XV3"/>
<dbReference type="KEGG" id="atr:2546581"/>
<dbReference type="KEGG" id="atr:2546597"/>
<dbReference type="OrthoDB" id="563989at2759"/>
<dbReference type="Proteomes" id="UP000017836">
    <property type="component" value="Chloroplast"/>
</dbReference>
<dbReference type="GO" id="GO:0009507">
    <property type="term" value="C:chloroplast"/>
    <property type="evidence" value="ECO:0007669"/>
    <property type="project" value="UniProtKB-SubCell"/>
</dbReference>
<dbReference type="GO" id="GO:0022625">
    <property type="term" value="C:cytosolic large ribosomal subunit"/>
    <property type="evidence" value="ECO:0000318"/>
    <property type="project" value="GO_Central"/>
</dbReference>
<dbReference type="GO" id="GO:0019843">
    <property type="term" value="F:rRNA binding"/>
    <property type="evidence" value="ECO:0007669"/>
    <property type="project" value="UniProtKB-UniRule"/>
</dbReference>
<dbReference type="GO" id="GO:0003735">
    <property type="term" value="F:structural constituent of ribosome"/>
    <property type="evidence" value="ECO:0000318"/>
    <property type="project" value="GO_Central"/>
</dbReference>
<dbReference type="GO" id="GO:0006412">
    <property type="term" value="P:translation"/>
    <property type="evidence" value="ECO:0007669"/>
    <property type="project" value="UniProtKB-UniRule"/>
</dbReference>
<dbReference type="FunFam" id="3.30.70.330:FF:000002">
    <property type="entry name" value="50S ribosomal protein L23, chloroplastic"/>
    <property type="match status" value="1"/>
</dbReference>
<dbReference type="Gene3D" id="3.30.70.330">
    <property type="match status" value="1"/>
</dbReference>
<dbReference type="HAMAP" id="MF_01369_B">
    <property type="entry name" value="Ribosomal_uL23_B"/>
    <property type="match status" value="1"/>
</dbReference>
<dbReference type="InterPro" id="IPR012677">
    <property type="entry name" value="Nucleotide-bd_a/b_plait_sf"/>
</dbReference>
<dbReference type="InterPro" id="IPR013025">
    <property type="entry name" value="Ribosomal_uL23-like"/>
</dbReference>
<dbReference type="InterPro" id="IPR012678">
    <property type="entry name" value="Ribosomal_uL23/eL15/eS24_sf"/>
</dbReference>
<dbReference type="InterPro" id="IPR001014">
    <property type="entry name" value="Ribosomal_uL23_CS"/>
</dbReference>
<dbReference type="PANTHER" id="PTHR11620">
    <property type="entry name" value="60S RIBOSOMAL PROTEIN L23A"/>
    <property type="match status" value="1"/>
</dbReference>
<dbReference type="Pfam" id="PF00276">
    <property type="entry name" value="Ribosomal_L23"/>
    <property type="match status" value="1"/>
</dbReference>
<dbReference type="SUPFAM" id="SSF54189">
    <property type="entry name" value="Ribosomal proteins S24e, L23 and L15e"/>
    <property type="match status" value="1"/>
</dbReference>
<dbReference type="PROSITE" id="PS00050">
    <property type="entry name" value="RIBOSOMAL_L23"/>
    <property type="match status" value="1"/>
</dbReference>
<name>RK23_AMBTC</name>
<reference key="1">
    <citation type="journal article" date="2003" name="Mol. Biol. Evol.">
        <title>Analysis of the Amborella trichopoda chloroplast genome sequence suggests that Amborella is not a basal angiosperm.</title>
        <authorList>
            <person name="Goremykin V.V."/>
            <person name="Hirsch-Ernst K.I."/>
            <person name="Wolfl S."/>
            <person name="Hellwig F.H."/>
        </authorList>
    </citation>
    <scope>NUCLEOTIDE SEQUENCE [LARGE SCALE GENOMIC DNA]</scope>
</reference>
<feature type="chain" id="PRO_0000272886" description="Large ribosomal subunit protein uL23cz/uL23cy">
    <location>
        <begin position="1"/>
        <end position="95"/>
    </location>
</feature>
<keyword id="KW-0150">Chloroplast</keyword>
<keyword id="KW-0934">Plastid</keyword>
<keyword id="KW-1185">Reference proteome</keyword>
<keyword id="KW-0687">Ribonucleoprotein</keyword>
<keyword id="KW-0689">Ribosomal protein</keyword>
<keyword id="KW-0694">RNA-binding</keyword>
<keyword id="KW-0699">rRNA-binding</keyword>
<evidence type="ECO:0000250" key="1"/>
<evidence type="ECO:0000305" key="2"/>
<gene>
    <name type="primary">rpl23-A</name>
</gene>
<gene>
    <name type="primary">rpl23-B</name>
</gene>
<protein>
    <recommendedName>
        <fullName evidence="2">Large ribosomal subunit protein uL23cz/uL23cy</fullName>
    </recommendedName>
    <alternativeName>
        <fullName>50S ribosomal protein L23, chloroplastic</fullName>
    </alternativeName>
</protein>
<geneLocation type="chloroplast"/>
<accession>Q70XV3</accession>